<dbReference type="EMBL" id="EU925939">
    <property type="protein sequence ID" value="ACI41271.1"/>
    <property type="molecule type" value="mRNA"/>
</dbReference>
<dbReference type="EMBL" id="FM863943">
    <property type="protein sequence ID" value="CAS03541.1"/>
    <property type="molecule type" value="mRNA"/>
</dbReference>
<dbReference type="SMR" id="B6DCK5"/>
<dbReference type="ArachnoServer" id="AS000884">
    <property type="toxin name" value="U1-lycotoxin-Ls1b"/>
</dbReference>
<dbReference type="GO" id="GO:0005576">
    <property type="term" value="C:extracellular region"/>
    <property type="evidence" value="ECO:0007669"/>
    <property type="project" value="UniProtKB-SubCell"/>
</dbReference>
<dbReference type="GO" id="GO:0090729">
    <property type="term" value="F:toxin activity"/>
    <property type="evidence" value="ECO:0007669"/>
    <property type="project" value="UniProtKB-KW"/>
</dbReference>
<dbReference type="InterPro" id="IPR019553">
    <property type="entry name" value="Spider_toxin_CSTX_knottin"/>
</dbReference>
<dbReference type="InterPro" id="IPR011142">
    <property type="entry name" value="Spider_toxin_CSTX_Knottin_CS"/>
</dbReference>
<dbReference type="Pfam" id="PF10530">
    <property type="entry name" value="Toxin_35"/>
    <property type="match status" value="1"/>
</dbReference>
<dbReference type="PROSITE" id="PS60029">
    <property type="entry name" value="SPIDER_CSTX"/>
    <property type="match status" value="1"/>
</dbReference>
<organism>
    <name type="scientific">Lycosa singoriensis</name>
    <name type="common">Wolf spider</name>
    <name type="synonym">Aranea singoriensis</name>
    <dbReference type="NCBI Taxonomy" id="434756"/>
    <lineage>
        <taxon>Eukaryota</taxon>
        <taxon>Metazoa</taxon>
        <taxon>Ecdysozoa</taxon>
        <taxon>Arthropoda</taxon>
        <taxon>Chelicerata</taxon>
        <taxon>Arachnida</taxon>
        <taxon>Araneae</taxon>
        <taxon>Araneomorphae</taxon>
        <taxon>Entelegynae</taxon>
        <taxon>Lycosoidea</taxon>
        <taxon>Lycosidae</taxon>
        <taxon>Lycosa</taxon>
    </lineage>
</organism>
<protein>
    <recommendedName>
        <fullName>U1-lycotoxin-Ls1b</fullName>
    </recommendedName>
    <alternativeName>
        <fullName>Toxin-like structure LSTX-A16</fullName>
    </alternativeName>
</protein>
<accession>B6DCK5</accession>
<sequence>MMKVLVVIALLVTLISYSSSEGIDDLEADELLSLMANEQTRKECIPKHHECTSNKHGCCRGNFFKYKCQCTTVVTQDGEQTERCFCGTPPHHKAAELVVGFGKKIFG</sequence>
<proteinExistence type="evidence at transcript level"/>
<feature type="signal peptide" evidence="2">
    <location>
        <begin position="1"/>
        <end position="20"/>
    </location>
</feature>
<feature type="propeptide" id="PRO_0000401529" evidence="1">
    <location>
        <begin position="21"/>
        <end position="41"/>
    </location>
</feature>
<feature type="chain" id="PRO_0000401530" description="U1-lycotoxin-Ls1b">
    <location>
        <begin position="42"/>
        <end position="107"/>
    </location>
</feature>
<feature type="disulfide bond" evidence="1">
    <location>
        <begin position="44"/>
        <end position="59"/>
    </location>
</feature>
<feature type="disulfide bond" evidence="1">
    <location>
        <begin position="51"/>
        <end position="68"/>
    </location>
</feature>
<feature type="disulfide bond" evidence="1">
    <location>
        <begin position="58"/>
        <end position="86"/>
    </location>
</feature>
<feature type="disulfide bond" evidence="1">
    <location>
        <begin position="70"/>
        <end position="84"/>
    </location>
</feature>
<comment type="subcellular location">
    <subcellularLocation>
        <location evidence="1">Secreted</location>
    </subcellularLocation>
</comment>
<comment type="tissue specificity">
    <text>Expressed by the venom gland.</text>
</comment>
<comment type="domain">
    <text evidence="1">The presence of a 'disulfide through disulfide knot' structurally defines this protein as a knottin.</text>
</comment>
<comment type="similarity">
    <text evidence="3">Belongs to the neurotoxin 19 (CSTX) family. 04 (U1-Lctx) subfamily.</text>
</comment>
<evidence type="ECO:0000250" key="1"/>
<evidence type="ECO:0000255" key="2"/>
<evidence type="ECO:0000305" key="3"/>
<name>TX116_LYCSI</name>
<reference key="1">
    <citation type="journal article" date="2010" name="Zoology">
        <title>Transcriptome analysis of the venom glands of the Chinese wolf spider Lycosa singoriensis.</title>
        <authorList>
            <person name="Zhang Y."/>
            <person name="Chen J."/>
            <person name="Tang X."/>
            <person name="Wang F."/>
            <person name="Jiang L."/>
            <person name="Xiong X."/>
            <person name="Wang M."/>
            <person name="Rong M."/>
            <person name="Liu Z."/>
            <person name="Liang S."/>
        </authorList>
    </citation>
    <scope>NUCLEOTIDE SEQUENCE [LARGE SCALE MRNA]</scope>
    <source>
        <tissue>Venom gland</tissue>
    </source>
</reference>
<keyword id="KW-1015">Disulfide bond</keyword>
<keyword id="KW-0960">Knottin</keyword>
<keyword id="KW-0964">Secreted</keyword>
<keyword id="KW-0732">Signal</keyword>
<keyword id="KW-0800">Toxin</keyword>